<comment type="function">
    <text evidence="1">Catalyzes the formation of pyridoxal 5'-phosphate from ribose 5-phosphate (RBP), glyceraldehyde 3-phosphate (G3P) and ammonia. The ammonia is provided by the PdxT subunit. Can also use ribulose 5-phosphate and dihydroxyacetone phosphate as substrates, resulting from enzyme-catalyzed isomerization of RBP and G3P, respectively.</text>
</comment>
<comment type="catalytic activity">
    <reaction evidence="1">
        <text>aldehydo-D-ribose 5-phosphate + D-glyceraldehyde 3-phosphate + L-glutamine = pyridoxal 5'-phosphate + L-glutamate + phosphate + 3 H2O + H(+)</text>
        <dbReference type="Rhea" id="RHEA:31507"/>
        <dbReference type="ChEBI" id="CHEBI:15377"/>
        <dbReference type="ChEBI" id="CHEBI:15378"/>
        <dbReference type="ChEBI" id="CHEBI:29985"/>
        <dbReference type="ChEBI" id="CHEBI:43474"/>
        <dbReference type="ChEBI" id="CHEBI:58273"/>
        <dbReference type="ChEBI" id="CHEBI:58359"/>
        <dbReference type="ChEBI" id="CHEBI:59776"/>
        <dbReference type="ChEBI" id="CHEBI:597326"/>
        <dbReference type="EC" id="4.3.3.6"/>
    </reaction>
</comment>
<comment type="pathway">
    <text evidence="1">Cofactor biosynthesis; pyridoxal 5'-phosphate biosynthesis.</text>
</comment>
<comment type="subunit">
    <text evidence="1">In the presence of PdxT, forms a dodecamer of heterodimers.</text>
</comment>
<comment type="similarity">
    <text evidence="1">Belongs to the PdxS/SNZ family.</text>
</comment>
<reference key="1">
    <citation type="journal article" date="2007" name="Genome Biol.">
        <title>Genome analysis and genome-wide proteomics of Thermococcus gammatolerans, the most radioresistant organism known amongst the Archaea.</title>
        <authorList>
            <person name="Zivanovic Y."/>
            <person name="Armengaud J."/>
            <person name="Lagorce A."/>
            <person name="Leplat C."/>
            <person name="Guerin P."/>
            <person name="Dutertre M."/>
            <person name="Anthouard V."/>
            <person name="Forterre P."/>
            <person name="Wincker P."/>
            <person name="Confalonieri F."/>
        </authorList>
    </citation>
    <scope>NUCLEOTIDE SEQUENCE [LARGE SCALE GENOMIC DNA]</scope>
    <source>
        <strain>DSM 15229 / JCM 11827 / EJ3</strain>
    </source>
</reference>
<dbReference type="EC" id="4.3.3.6" evidence="1"/>
<dbReference type="EMBL" id="CP001398">
    <property type="protein sequence ID" value="ACS33131.1"/>
    <property type="molecule type" value="Genomic_DNA"/>
</dbReference>
<dbReference type="RefSeq" id="WP_015858249.1">
    <property type="nucleotide sequence ID" value="NC_012804.1"/>
</dbReference>
<dbReference type="SMR" id="C5A4G9"/>
<dbReference type="STRING" id="593117.TGAM_0629"/>
<dbReference type="PaxDb" id="593117-TGAM_0629"/>
<dbReference type="GeneID" id="7987252"/>
<dbReference type="KEGG" id="tga:TGAM_0629"/>
<dbReference type="PATRIC" id="fig|593117.10.peg.627"/>
<dbReference type="eggNOG" id="arCOG04075">
    <property type="taxonomic scope" value="Archaea"/>
</dbReference>
<dbReference type="HOGENOM" id="CLU_055352_1_0_2"/>
<dbReference type="OrthoDB" id="6840at2157"/>
<dbReference type="UniPathway" id="UPA00245"/>
<dbReference type="Proteomes" id="UP000001488">
    <property type="component" value="Chromosome"/>
</dbReference>
<dbReference type="GO" id="GO:0036381">
    <property type="term" value="F:pyridoxal 5'-phosphate synthase (glutamine hydrolysing) activity"/>
    <property type="evidence" value="ECO:0007669"/>
    <property type="project" value="UniProtKB-UniRule"/>
</dbReference>
<dbReference type="GO" id="GO:0006520">
    <property type="term" value="P:amino acid metabolic process"/>
    <property type="evidence" value="ECO:0007669"/>
    <property type="project" value="TreeGrafter"/>
</dbReference>
<dbReference type="GO" id="GO:0042823">
    <property type="term" value="P:pyridoxal phosphate biosynthetic process"/>
    <property type="evidence" value="ECO:0007669"/>
    <property type="project" value="UniProtKB-UniRule"/>
</dbReference>
<dbReference type="GO" id="GO:0008615">
    <property type="term" value="P:pyridoxine biosynthetic process"/>
    <property type="evidence" value="ECO:0007669"/>
    <property type="project" value="TreeGrafter"/>
</dbReference>
<dbReference type="CDD" id="cd04727">
    <property type="entry name" value="pdxS"/>
    <property type="match status" value="1"/>
</dbReference>
<dbReference type="FunFam" id="3.20.20.70:FF:000406">
    <property type="entry name" value="Pyridoxal 5'-phosphate synthase subunit PdxS"/>
    <property type="match status" value="1"/>
</dbReference>
<dbReference type="Gene3D" id="3.20.20.70">
    <property type="entry name" value="Aldolase class I"/>
    <property type="match status" value="1"/>
</dbReference>
<dbReference type="HAMAP" id="MF_01824">
    <property type="entry name" value="PdxS"/>
    <property type="match status" value="1"/>
</dbReference>
<dbReference type="InterPro" id="IPR013785">
    <property type="entry name" value="Aldolase_TIM"/>
</dbReference>
<dbReference type="InterPro" id="IPR001852">
    <property type="entry name" value="PdxS/SNZ"/>
</dbReference>
<dbReference type="InterPro" id="IPR033755">
    <property type="entry name" value="PdxS/SNZ_N"/>
</dbReference>
<dbReference type="InterPro" id="IPR011060">
    <property type="entry name" value="RibuloseP-bd_barrel"/>
</dbReference>
<dbReference type="InterPro" id="IPR033983">
    <property type="entry name" value="Thiazole_synthase_ThiG"/>
</dbReference>
<dbReference type="NCBIfam" id="NF003215">
    <property type="entry name" value="PRK04180.1"/>
    <property type="match status" value="1"/>
</dbReference>
<dbReference type="NCBIfam" id="TIGR00343">
    <property type="entry name" value="pyridoxal 5'-phosphate synthase lyase subunit PdxS"/>
    <property type="match status" value="1"/>
</dbReference>
<dbReference type="PANTHER" id="PTHR31829">
    <property type="entry name" value="PYRIDOXAL 5'-PHOSPHATE SYNTHASE SUBUNIT SNZ1-RELATED"/>
    <property type="match status" value="1"/>
</dbReference>
<dbReference type="PANTHER" id="PTHR31829:SF0">
    <property type="entry name" value="PYRIDOXAL 5'-PHOSPHATE SYNTHASE SUBUNIT SNZ1-RELATED"/>
    <property type="match status" value="1"/>
</dbReference>
<dbReference type="Pfam" id="PF01680">
    <property type="entry name" value="SOR_SNZ"/>
    <property type="match status" value="1"/>
</dbReference>
<dbReference type="Pfam" id="PF05690">
    <property type="entry name" value="ThiG"/>
    <property type="match status" value="1"/>
</dbReference>
<dbReference type="PIRSF" id="PIRSF029271">
    <property type="entry name" value="Pdx1"/>
    <property type="match status" value="1"/>
</dbReference>
<dbReference type="SUPFAM" id="SSF51366">
    <property type="entry name" value="Ribulose-phoshate binding barrel"/>
    <property type="match status" value="1"/>
</dbReference>
<dbReference type="PROSITE" id="PS01235">
    <property type="entry name" value="PDXS_SNZ_1"/>
    <property type="match status" value="1"/>
</dbReference>
<dbReference type="PROSITE" id="PS51129">
    <property type="entry name" value="PDXS_SNZ_2"/>
    <property type="match status" value="1"/>
</dbReference>
<protein>
    <recommendedName>
        <fullName evidence="1">Pyridoxal 5'-phosphate synthase subunit PdxS</fullName>
        <shortName evidence="1">PLP synthase subunit PdxS</shortName>
        <ecNumber evidence="1">4.3.3.6</ecNumber>
    </recommendedName>
    <alternativeName>
        <fullName evidence="1">Pdx1</fullName>
    </alternativeName>
</protein>
<organism>
    <name type="scientific">Thermococcus gammatolerans (strain DSM 15229 / JCM 11827 / EJ3)</name>
    <dbReference type="NCBI Taxonomy" id="593117"/>
    <lineage>
        <taxon>Archaea</taxon>
        <taxon>Methanobacteriati</taxon>
        <taxon>Methanobacteriota</taxon>
        <taxon>Thermococci</taxon>
        <taxon>Thermococcales</taxon>
        <taxon>Thermococcaceae</taxon>
        <taxon>Thermococcus</taxon>
    </lineage>
</organism>
<feature type="chain" id="PRO_1000216067" description="Pyridoxal 5'-phosphate synthase subunit PdxS">
    <location>
        <begin position="1"/>
        <end position="335"/>
    </location>
</feature>
<feature type="active site" description="Schiff-base intermediate with D-ribose 5-phosphate" evidence="1">
    <location>
        <position position="87"/>
    </location>
</feature>
<feature type="binding site" evidence="1">
    <location>
        <position position="30"/>
    </location>
    <ligand>
        <name>D-ribose 5-phosphate</name>
        <dbReference type="ChEBI" id="CHEBI:78346"/>
    </ligand>
</feature>
<feature type="binding site" evidence="1">
    <location>
        <position position="159"/>
    </location>
    <ligand>
        <name>D-ribose 5-phosphate</name>
        <dbReference type="ChEBI" id="CHEBI:78346"/>
    </ligand>
</feature>
<feature type="binding site" evidence="1">
    <location>
        <position position="171"/>
    </location>
    <ligand>
        <name>D-glyceraldehyde 3-phosphate</name>
        <dbReference type="ChEBI" id="CHEBI:59776"/>
    </ligand>
</feature>
<feature type="binding site" evidence="1">
    <location>
        <position position="257"/>
    </location>
    <ligand>
        <name>D-ribose 5-phosphate</name>
        <dbReference type="ChEBI" id="CHEBI:78346"/>
    </ligand>
</feature>
<feature type="binding site" evidence="1">
    <location>
        <begin position="278"/>
        <end position="279"/>
    </location>
    <ligand>
        <name>D-ribose 5-phosphate</name>
        <dbReference type="ChEBI" id="CHEBI:78346"/>
    </ligand>
</feature>
<keyword id="KW-0456">Lyase</keyword>
<keyword id="KW-0663">Pyridoxal phosphate</keyword>
<keyword id="KW-1185">Reference proteome</keyword>
<keyword id="KW-0704">Schiff base</keyword>
<accession>C5A4G9</accession>
<name>PDXS_THEGJ</name>
<gene>
    <name evidence="1" type="primary">pdxS</name>
    <name type="ordered locus">TGAM_0629</name>
</gene>
<proteinExistence type="inferred from homology"/>
<evidence type="ECO:0000255" key="1">
    <source>
        <dbReference type="HAMAP-Rule" id="MF_01824"/>
    </source>
</evidence>
<sequence>MGKLDIIEKKGTERLKRGFAKMVKGGVIMDVTNAEQARIAEEAGAVAVMALHRVPADIRKAGGVARMAPIEKIQEIMDAVTIPVMAKVRIGHVAEARILEALGVDMIDESEVLTPSDPYFHIDKREFKIPFVCGNRNLGEAVRRIWEGAAMMRTKGEAGTGNIIEAVRHVRLLKDNIALLQRMTDEQIYGVAEKFAEPYLRLAFEVREISGLPKQVLENEPVYGHYTYREIVEGLYKILLEIKKLGRLPVVNFAAGGVATPADAALMMQMGMDGVFVGSGIFKSSNPPKMARAIVEAVNHWDEPDVLVEISKEIGEPMRGQDIEELEVRLEERGV</sequence>